<proteinExistence type="evidence at protein level"/>
<protein>
    <recommendedName>
        <fullName evidence="5">Ornithine carbamoyltransferase subunit F</fullName>
        <shortName evidence="5">OTCase-2</shortName>
        <ecNumber evidence="1">2.1.3.3</ecNumber>
    </recommendedName>
</protein>
<sequence length="334" mass="36827">MSDLYKKHFLKLLDFTPAQFTSLLTLAAQLKADKKNGKEVQKLTGKNIALIFEKDSTRTRCSFEVAAFDQGARVTYLGPSGSQIGHKESIKDTARVLGRMYDGIQYRGHGQEVVETLAQYAGVPVWNGLTNEFHPTQLLADLMTMQEHLPGKAFNEMTLVYAGDARNNMGNSMLEAAALTGLDLRLLAPKACWPEESLVAECSALAEKHGGKITLTEDVAAGVKGADFIYTDVWVSMGEAKEKWAERIALLRGYQVNAQMMALTDNPNVKFLHCLPAFHDDQTTLGKQMAKEFDLHGGMEVTDEVFESAASIVFDQAENRMHTIKAVMMATLGE</sequence>
<name>OTC2_ECOLI</name>
<evidence type="ECO:0000255" key="1">
    <source>
        <dbReference type="HAMAP-Rule" id="MF_01109"/>
    </source>
</evidence>
<evidence type="ECO:0000269" key="2">
    <source>
    </source>
</evidence>
<evidence type="ECO:0000269" key="3">
    <source>
    </source>
</evidence>
<evidence type="ECO:0000269" key="4">
    <source>
    </source>
</evidence>
<evidence type="ECO:0000303" key="5">
    <source>
    </source>
</evidence>
<evidence type="ECO:0000305" key="6"/>
<evidence type="ECO:0000305" key="7">
    <source>
    </source>
</evidence>
<feature type="initiator methionine" description="Removed" evidence="2">
    <location>
        <position position="1"/>
    </location>
</feature>
<feature type="chain" id="PRO_0000112919" description="Ornithine carbamoyltransferase subunit F">
    <location>
        <begin position="2"/>
        <end position="334"/>
    </location>
</feature>
<feature type="binding site" evidence="1">
    <location>
        <begin position="56"/>
        <end position="59"/>
    </location>
    <ligand>
        <name>carbamoyl phosphate</name>
        <dbReference type="ChEBI" id="CHEBI:58228"/>
    </ligand>
</feature>
<feature type="binding site" evidence="1">
    <location>
        <position position="83"/>
    </location>
    <ligand>
        <name>carbamoyl phosphate</name>
        <dbReference type="ChEBI" id="CHEBI:58228"/>
    </ligand>
</feature>
<feature type="binding site" evidence="1">
    <location>
        <position position="107"/>
    </location>
    <ligand>
        <name>carbamoyl phosphate</name>
        <dbReference type="ChEBI" id="CHEBI:58228"/>
    </ligand>
</feature>
<feature type="binding site" evidence="1">
    <location>
        <begin position="134"/>
        <end position="137"/>
    </location>
    <ligand>
        <name>carbamoyl phosphate</name>
        <dbReference type="ChEBI" id="CHEBI:58228"/>
    </ligand>
</feature>
<feature type="binding site" evidence="1">
    <location>
        <position position="168"/>
    </location>
    <ligand>
        <name>L-ornithine</name>
        <dbReference type="ChEBI" id="CHEBI:46911"/>
    </ligand>
</feature>
<feature type="binding site" evidence="1">
    <location>
        <position position="232"/>
    </location>
    <ligand>
        <name>L-ornithine</name>
        <dbReference type="ChEBI" id="CHEBI:46911"/>
    </ligand>
</feature>
<feature type="binding site" evidence="1">
    <location>
        <begin position="236"/>
        <end position="237"/>
    </location>
    <ligand>
        <name>L-ornithine</name>
        <dbReference type="ChEBI" id="CHEBI:46911"/>
    </ligand>
</feature>
<feature type="binding site" evidence="1">
    <location>
        <begin position="274"/>
        <end position="275"/>
    </location>
    <ligand>
        <name>carbamoyl phosphate</name>
        <dbReference type="ChEBI" id="CHEBI:58228"/>
    </ligand>
</feature>
<feature type="binding site" evidence="1">
    <location>
        <position position="320"/>
    </location>
    <ligand>
        <name>carbamoyl phosphate</name>
        <dbReference type="ChEBI" id="CHEBI:58228"/>
    </ligand>
</feature>
<feature type="sequence conflict" description="In Ref. 1; CAA25329." evidence="6" ref="1">
    <original>A</original>
    <variation>P</variation>
    <location>
        <position position="121"/>
    </location>
</feature>
<gene>
    <name evidence="5" type="primary">argF</name>
    <name type="ordered locus">b0273</name>
    <name type="ordered locus">JW0266</name>
</gene>
<accession>P06960</accession>
<accession>P78308</accession>
<accession>Q2MCE9</accession>
<comment type="function">
    <text evidence="4">Reversibly catalyzes the transfer of the carbamoyl group from carbamoyl phosphate (CP) to the N(epsilon) atom of ornithine (ORN) to produce L-citrulline, which is a substrate for argininosuccinate synthetase, the enzyme involved in the final step in arginine biosynthesis.</text>
</comment>
<comment type="catalytic activity">
    <reaction evidence="1">
        <text>carbamoyl phosphate + L-ornithine = L-citrulline + phosphate + H(+)</text>
        <dbReference type="Rhea" id="RHEA:19513"/>
        <dbReference type="ChEBI" id="CHEBI:15378"/>
        <dbReference type="ChEBI" id="CHEBI:43474"/>
        <dbReference type="ChEBI" id="CHEBI:46911"/>
        <dbReference type="ChEBI" id="CHEBI:57743"/>
        <dbReference type="ChEBI" id="CHEBI:58228"/>
        <dbReference type="EC" id="2.1.3.3"/>
    </reaction>
</comment>
<comment type="biophysicochemical properties">
    <kinetics>
        <KM evidence="4">0.02 mM for carbamoyl phosphate</KM>
        <KM evidence="4">5 mM for L-ornithine</KM>
    </kinetics>
</comment>
<comment type="pathway">
    <text evidence="6">Amino-acid biosynthesis; L-arginine biosynthesis; L-arginine from L-ornithine and carbamoyl phosphate: step 1/3.</text>
</comment>
<comment type="subunit">
    <text evidence="3 4">In E.coli strain K12, trimer of identical or non-identical chains are composed of ArgI (I) and/or ArgF (F). The trimer has the following composition: FFI, FFF, FII, III. E.coli strains B and W, which are known to contain only ArgI, produce only a trimer of identical chains (III).</text>
</comment>
<comment type="subcellular location">
    <subcellularLocation>
        <location evidence="6">Cytoplasm</location>
    </subcellularLocation>
</comment>
<comment type="miscellaneous">
    <text evidence="7">ArgF might be the product of a relatively recent event (duplication or transposition) peculiar to E.coli strain K-12.</text>
</comment>
<comment type="similarity">
    <text evidence="6">Belongs to the aspartate/ornithine carbamoyltransferase superfamily. OTCase family.</text>
</comment>
<dbReference type="EC" id="2.1.3.3" evidence="1"/>
<dbReference type="EMBL" id="X00759">
    <property type="protein sequence ID" value="CAA25329.1"/>
    <property type="molecule type" value="Genomic_DNA"/>
</dbReference>
<dbReference type="EMBL" id="U70214">
    <property type="protein sequence ID" value="AAB08694.1"/>
    <property type="molecule type" value="Genomic_DNA"/>
</dbReference>
<dbReference type="EMBL" id="U00096">
    <property type="protein sequence ID" value="AAC73376.1"/>
    <property type="molecule type" value="Genomic_DNA"/>
</dbReference>
<dbReference type="EMBL" id="AP009048">
    <property type="protein sequence ID" value="BAE76057.1"/>
    <property type="molecule type" value="Genomic_DNA"/>
</dbReference>
<dbReference type="PIR" id="A64753">
    <property type="entry name" value="OWECF"/>
</dbReference>
<dbReference type="RefSeq" id="NP_414807.1">
    <property type="nucleotide sequence ID" value="NC_000913.3"/>
</dbReference>
<dbReference type="RefSeq" id="WP_001281825.1">
    <property type="nucleotide sequence ID" value="NZ_LN832404.1"/>
</dbReference>
<dbReference type="SMR" id="P06960"/>
<dbReference type="BioGRID" id="4261491">
    <property type="interactions" value="21"/>
</dbReference>
<dbReference type="ComplexPortal" id="CPX-5625">
    <property type="entry name" value="Ornithine transcarbamoylase complex, argFII variant"/>
</dbReference>
<dbReference type="ComplexPortal" id="CPX-5626">
    <property type="entry name" value="Ornithine transcarbamoylase complex, argFFI variant"/>
</dbReference>
<dbReference type="ComplexPortal" id="CPX-5627">
    <property type="entry name" value="Ornithine transcarbamoylase complex, argFFF variant"/>
</dbReference>
<dbReference type="FunCoup" id="P06960">
    <property type="interactions" value="603"/>
</dbReference>
<dbReference type="IntAct" id="P06960">
    <property type="interactions" value="7"/>
</dbReference>
<dbReference type="STRING" id="511145.b0273"/>
<dbReference type="PaxDb" id="511145-b0273"/>
<dbReference type="EnsemblBacteria" id="AAC73376">
    <property type="protein sequence ID" value="AAC73376"/>
    <property type="gene ID" value="b0273"/>
</dbReference>
<dbReference type="GeneID" id="944844"/>
<dbReference type="KEGG" id="ecj:JW0266"/>
<dbReference type="KEGG" id="eco:b0273"/>
<dbReference type="KEGG" id="ecoc:C3026_01325"/>
<dbReference type="PATRIC" id="fig|1411691.4.peg.2007"/>
<dbReference type="EchoBASE" id="EB0065"/>
<dbReference type="eggNOG" id="COG0078">
    <property type="taxonomic scope" value="Bacteria"/>
</dbReference>
<dbReference type="HOGENOM" id="CLU_043846_3_1_6"/>
<dbReference type="InParanoid" id="P06960"/>
<dbReference type="OMA" id="CISHKHF"/>
<dbReference type="OrthoDB" id="9802587at2"/>
<dbReference type="PhylomeDB" id="P06960"/>
<dbReference type="BioCyc" id="EcoCyc:CHAINF-MONOMER"/>
<dbReference type="BioCyc" id="MetaCyc:CHAINF-MONOMER"/>
<dbReference type="SABIO-RK" id="P06960"/>
<dbReference type="UniPathway" id="UPA00068">
    <property type="reaction ID" value="UER00112"/>
</dbReference>
<dbReference type="PRO" id="PR:P06960"/>
<dbReference type="Proteomes" id="UP000000625">
    <property type="component" value="Chromosome"/>
</dbReference>
<dbReference type="GO" id="GO:0005737">
    <property type="term" value="C:cytoplasm"/>
    <property type="evidence" value="ECO:0007669"/>
    <property type="project" value="UniProtKB-SubCell"/>
</dbReference>
<dbReference type="GO" id="GO:0016597">
    <property type="term" value="F:amino acid binding"/>
    <property type="evidence" value="ECO:0007669"/>
    <property type="project" value="InterPro"/>
</dbReference>
<dbReference type="GO" id="GO:0046872">
    <property type="term" value="F:metal ion binding"/>
    <property type="evidence" value="ECO:0007669"/>
    <property type="project" value="UniProtKB-KW"/>
</dbReference>
<dbReference type="GO" id="GO:0004585">
    <property type="term" value="F:ornithine carbamoyltransferase activity"/>
    <property type="evidence" value="ECO:0000314"/>
    <property type="project" value="EcoCyc"/>
</dbReference>
<dbReference type="GO" id="GO:0042450">
    <property type="term" value="P:arginine biosynthetic process via ornithine"/>
    <property type="evidence" value="ECO:0000318"/>
    <property type="project" value="GO_Central"/>
</dbReference>
<dbReference type="GO" id="GO:0019240">
    <property type="term" value="P:citrulline biosynthetic process"/>
    <property type="evidence" value="ECO:0000314"/>
    <property type="project" value="ComplexPortal"/>
</dbReference>
<dbReference type="GO" id="GO:0006974">
    <property type="term" value="P:DNA damage response"/>
    <property type="evidence" value="ECO:0000270"/>
    <property type="project" value="EcoliWiki"/>
</dbReference>
<dbReference type="GO" id="GO:0006526">
    <property type="term" value="P:L-arginine biosynthetic process"/>
    <property type="evidence" value="ECO:0007669"/>
    <property type="project" value="UniProtKB-UniRule"/>
</dbReference>
<dbReference type="FunFam" id="3.40.50.1370:FF:000004">
    <property type="entry name" value="Ornithine carbamoyltransferase"/>
    <property type="match status" value="1"/>
</dbReference>
<dbReference type="Gene3D" id="3.40.50.1370">
    <property type="entry name" value="Aspartate/ornithine carbamoyltransferase"/>
    <property type="match status" value="2"/>
</dbReference>
<dbReference type="HAMAP" id="MF_01109">
    <property type="entry name" value="OTCase"/>
    <property type="match status" value="1"/>
</dbReference>
<dbReference type="InterPro" id="IPR006132">
    <property type="entry name" value="Asp/Orn_carbamoyltranf_P-bd"/>
</dbReference>
<dbReference type="InterPro" id="IPR006130">
    <property type="entry name" value="Asp/Orn_carbamoylTrfase"/>
</dbReference>
<dbReference type="InterPro" id="IPR036901">
    <property type="entry name" value="Asp/Orn_carbamoylTrfase_sf"/>
</dbReference>
<dbReference type="InterPro" id="IPR006131">
    <property type="entry name" value="Asp_carbamoyltransf_Asp/Orn-bd"/>
</dbReference>
<dbReference type="InterPro" id="IPR002292">
    <property type="entry name" value="Orn/put_carbamltrans"/>
</dbReference>
<dbReference type="InterPro" id="IPR024904">
    <property type="entry name" value="OTCase_ArgI"/>
</dbReference>
<dbReference type="NCBIfam" id="TIGR00658">
    <property type="entry name" value="orni_carb_tr"/>
    <property type="match status" value="1"/>
</dbReference>
<dbReference type="NCBIfam" id="NF009213">
    <property type="entry name" value="PRK12562.1"/>
    <property type="match status" value="1"/>
</dbReference>
<dbReference type="PANTHER" id="PTHR45753:SF4">
    <property type="entry name" value="ORNITHINE CARBAMOYLTRANSFERASE SUBUNIT F-RELATED"/>
    <property type="match status" value="1"/>
</dbReference>
<dbReference type="PANTHER" id="PTHR45753">
    <property type="entry name" value="ORNITHINE CARBAMOYLTRANSFERASE, MITOCHONDRIAL"/>
    <property type="match status" value="1"/>
</dbReference>
<dbReference type="Pfam" id="PF00185">
    <property type="entry name" value="OTCace"/>
    <property type="match status" value="1"/>
</dbReference>
<dbReference type="Pfam" id="PF02729">
    <property type="entry name" value="OTCace_N"/>
    <property type="match status" value="1"/>
</dbReference>
<dbReference type="PRINTS" id="PR00100">
    <property type="entry name" value="AOTCASE"/>
</dbReference>
<dbReference type="PRINTS" id="PR00102">
    <property type="entry name" value="OTCASE"/>
</dbReference>
<dbReference type="SUPFAM" id="SSF53671">
    <property type="entry name" value="Aspartate/ornithine carbamoyltransferase"/>
    <property type="match status" value="1"/>
</dbReference>
<dbReference type="PROSITE" id="PS00097">
    <property type="entry name" value="CARBAMOYLTRANSFERASE"/>
    <property type="match status" value="1"/>
</dbReference>
<reference key="1">
    <citation type="journal article" date="1984" name="Nucleic Acids Res.">
        <title>Evolutionary divergence of genes for ornithine and aspartate carbamoyl-transferases -- complete sequence and mode of regulation of the Escherichia coli argF gene; comparison of argF with argI and pyrB.</title>
        <authorList>
            <person name="van Vliet F."/>
            <person name="Cunin R."/>
            <person name="Jacobs A."/>
            <person name="Piette J."/>
            <person name="Gigot D."/>
            <person name="Lauwereys M."/>
            <person name="Pierard A."/>
            <person name="Glansdorff N."/>
        </authorList>
    </citation>
    <scope>NUCLEOTIDE SEQUENCE [GENOMIC DNA]</scope>
</reference>
<reference key="2">
    <citation type="submission" date="1997-01" db="EMBL/GenBank/DDBJ databases">
        <title>Sequence of minutes 4-25 of Escherichia coli.</title>
        <authorList>
            <person name="Chung E."/>
            <person name="Allen E."/>
            <person name="Araujo R."/>
            <person name="Aparicio A.M."/>
            <person name="Davis K."/>
            <person name="Duncan M."/>
            <person name="Federspiel N."/>
            <person name="Hyman R."/>
            <person name="Kalman S."/>
            <person name="Komp C."/>
            <person name="Kurdi O."/>
            <person name="Lew H."/>
            <person name="Lin D."/>
            <person name="Namath A."/>
            <person name="Oefner P."/>
            <person name="Roberts D."/>
            <person name="Schramm S."/>
            <person name="Davis R.W."/>
        </authorList>
    </citation>
    <scope>NUCLEOTIDE SEQUENCE [LARGE SCALE GENOMIC DNA]</scope>
    <source>
        <strain>K12 / MG1655 / ATCC 47076</strain>
    </source>
</reference>
<reference key="3">
    <citation type="journal article" date="1997" name="Science">
        <title>The complete genome sequence of Escherichia coli K-12.</title>
        <authorList>
            <person name="Blattner F.R."/>
            <person name="Plunkett G. III"/>
            <person name="Bloch C.A."/>
            <person name="Perna N.T."/>
            <person name="Burland V."/>
            <person name="Riley M."/>
            <person name="Collado-Vides J."/>
            <person name="Glasner J.D."/>
            <person name="Rode C.K."/>
            <person name="Mayhew G.F."/>
            <person name="Gregor J."/>
            <person name="Davis N.W."/>
            <person name="Kirkpatrick H.A."/>
            <person name="Goeden M.A."/>
            <person name="Rose D.J."/>
            <person name="Mau B."/>
            <person name="Shao Y."/>
        </authorList>
    </citation>
    <scope>NUCLEOTIDE SEQUENCE [LARGE SCALE GENOMIC DNA]</scope>
    <source>
        <strain>K12 / MG1655 / ATCC 47076</strain>
    </source>
</reference>
<reference key="4">
    <citation type="journal article" date="2006" name="Mol. Syst. Biol.">
        <title>Highly accurate genome sequences of Escherichia coli K-12 strains MG1655 and W3110.</title>
        <authorList>
            <person name="Hayashi K."/>
            <person name="Morooka N."/>
            <person name="Yamamoto Y."/>
            <person name="Fujita K."/>
            <person name="Isono K."/>
            <person name="Choi S."/>
            <person name="Ohtsubo E."/>
            <person name="Baba T."/>
            <person name="Wanner B.L."/>
            <person name="Mori H."/>
            <person name="Horiuchi T."/>
        </authorList>
    </citation>
    <scope>NUCLEOTIDE SEQUENCE [LARGE SCALE GENOMIC DNA]</scope>
    <source>
        <strain>K12 / W3110 / ATCC 27325 / DSM 5911</strain>
    </source>
</reference>
<reference key="5">
    <citation type="journal article" date="1985" name="J. Bacteriol.">
        <title>Immunological and structural relatedness of catabolic ornithine carbamoyltransferases and the anabolic enzymes of enterobacteria.</title>
        <authorList>
            <person name="Falmagne P."/>
            <person name="Portetelle D."/>
            <person name="Stalon V."/>
        </authorList>
    </citation>
    <scope>PROTEIN SEQUENCE OF 2-41</scope>
</reference>
<reference key="6">
    <citation type="journal article" date="1972" name="Eur. J. Biochem.">
        <title>The dual genetic control of ornithine carbamolytransferase in Escherichia coli. A case of bacterial hybrid enzymes.</title>
        <authorList>
            <person name="Legrain C."/>
            <person name="Halleux P."/>
            <person name="Stalon V."/>
            <person name="Glansdorff N."/>
        </authorList>
    </citation>
    <scope>SUBUNIT</scope>
</reference>
<reference key="7">
    <citation type="journal article" date="1976" name="J. Bacteriol.">
        <title>Escherichia coli ornithine carbamolytransferase isoenzymes: evolutionary significance and the isolation of lambdaargF and lambdaargI transducing bacteriophages.</title>
        <authorList>
            <person name="Legrain C."/>
            <person name="Stalon V."/>
            <person name="Glansdorff N."/>
        </authorList>
    </citation>
    <scope>FUNCTION</scope>
    <scope>BIOPHYSICOCHEMICAL PROPERTIES</scope>
    <scope>SUBUNIT</scope>
</reference>
<keyword id="KW-0028">Amino-acid biosynthesis</keyword>
<keyword id="KW-0055">Arginine biosynthesis</keyword>
<keyword id="KW-0963">Cytoplasm</keyword>
<keyword id="KW-0903">Direct protein sequencing</keyword>
<keyword id="KW-0479">Metal-binding</keyword>
<keyword id="KW-1185">Reference proteome</keyword>
<keyword id="KW-0808">Transferase</keyword>
<keyword id="KW-0862">Zinc</keyword>
<organism>
    <name type="scientific">Escherichia coli (strain K12)</name>
    <dbReference type="NCBI Taxonomy" id="83333"/>
    <lineage>
        <taxon>Bacteria</taxon>
        <taxon>Pseudomonadati</taxon>
        <taxon>Pseudomonadota</taxon>
        <taxon>Gammaproteobacteria</taxon>
        <taxon>Enterobacterales</taxon>
        <taxon>Enterobacteriaceae</taxon>
        <taxon>Escherichia</taxon>
    </lineage>
</organism>